<comment type="function">
    <text evidence="2">E3 ubiquitin-protein ligase that ubiquitinates Beclin-1/BECN1 in a 'Lys-63'-dependent manner enhancing its binding to ULK1. In turn, promotes starvation-induced autophagy activation. Also interacts with p62/SQSTM1 protein and thereby induces the formation and the autophagy clearance of aggresome-associated polyubiquitinated proteins through HDAC6 interaction. Also promotes NLRP3 inflammasome activation by directly inducing NLRP3 oligomerization independent of its E3 ligase function (By similarity).</text>
</comment>
<comment type="catalytic activity">
    <reaction evidence="2">
        <text>S-ubiquitinyl-[E2 ubiquitin-conjugating enzyme]-L-cysteine + [acceptor protein]-L-lysine = [E2 ubiquitin-conjugating enzyme]-L-cysteine + N(6)-ubiquitinyl-[acceptor protein]-L-lysine.</text>
        <dbReference type="EC" id="2.3.2.27"/>
    </reaction>
</comment>
<comment type="subunit">
    <text evidence="1 2">Can form dimers and trimers. Interacts with several E2 ubiquitin-conjugating enzymes, including UBE2L6, UBE2E1, UBE2E3. No interaction with UBE2H. Interacts with BECN1. Interacts with SQSTM1. Interacts with NLRP3.</text>
</comment>
<comment type="subcellular location">
    <subcellularLocation>
        <location evidence="2">Cytoplasm</location>
    </subcellularLocation>
    <text evidence="2">Localizes mainly into discrete cytoplasmic punctuate structures heterogeneous in size and shape containing polyubiquitinated proteins.</text>
</comment>
<comment type="PTM">
    <text evidence="2">Auto-ubiquitinated.</text>
</comment>
<comment type="PTM">
    <text evidence="2">Acetylated by EP300 and KAT2B. HDAC6 drives TRIM50 deacetylation. Acetylation antagonizes with TRIM50 ubiquitination.</text>
</comment>
<comment type="similarity">
    <text evidence="7">Belongs to the TRIM/RBCC family.</text>
</comment>
<reference key="1">
    <citation type="submission" date="2002-03" db="EMBL/GenBank/DDBJ databases">
        <title>Novel genes in the Williams-Beuren Syndrome critical region.</title>
        <authorList>
            <person name="Ucla C."/>
            <person name="Merla G."/>
            <person name="Meroni G."/>
            <person name="Reymond A."/>
        </authorList>
    </citation>
    <scope>NUCLEOTIDE SEQUENCE [MRNA]</scope>
</reference>
<feature type="chain" id="PRO_0000056276" description="E3 ubiquitin-protein ligase TRIM50">
    <location>
        <begin position="1"/>
        <end position="486"/>
    </location>
</feature>
<feature type="domain" description="B30.2/SPRY" evidence="6">
    <location>
        <begin position="275"/>
        <end position="474"/>
    </location>
</feature>
<feature type="zinc finger region" description="RING-type" evidence="5">
    <location>
        <begin position="16"/>
        <end position="57"/>
    </location>
</feature>
<feature type="zinc finger region" description="B box-type" evidence="4">
    <location>
        <begin position="84"/>
        <end position="125"/>
    </location>
</feature>
<feature type="coiled-coil region" evidence="3">
    <location>
        <begin position="125"/>
        <end position="170"/>
    </location>
</feature>
<feature type="coiled-coil region" evidence="3">
    <location>
        <begin position="204"/>
        <end position="235"/>
    </location>
</feature>
<feature type="binding site" evidence="4">
    <location>
        <position position="89"/>
    </location>
    <ligand>
        <name>Zn(2+)</name>
        <dbReference type="ChEBI" id="CHEBI:29105"/>
    </ligand>
</feature>
<feature type="binding site" evidence="4">
    <location>
        <position position="92"/>
    </location>
    <ligand>
        <name>Zn(2+)</name>
        <dbReference type="ChEBI" id="CHEBI:29105"/>
    </ligand>
</feature>
<feature type="binding site" evidence="4">
    <location>
        <position position="111"/>
    </location>
    <ligand>
        <name>Zn(2+)</name>
        <dbReference type="ChEBI" id="CHEBI:29105"/>
    </ligand>
</feature>
<feature type="binding site" evidence="4">
    <location>
        <position position="117"/>
    </location>
    <ligand>
        <name>Zn(2+)</name>
        <dbReference type="ChEBI" id="CHEBI:29105"/>
    </ligand>
</feature>
<feature type="modified residue" description="N6-acetyllysine" evidence="1">
    <location>
        <position position="372"/>
    </location>
</feature>
<evidence type="ECO:0000250" key="1">
    <source>
        <dbReference type="UniProtKB" id="Q810I2"/>
    </source>
</evidence>
<evidence type="ECO:0000250" key="2">
    <source>
        <dbReference type="UniProtKB" id="Q86XT4"/>
    </source>
</evidence>
<evidence type="ECO:0000255" key="3"/>
<evidence type="ECO:0000255" key="4">
    <source>
        <dbReference type="PROSITE-ProRule" id="PRU00024"/>
    </source>
</evidence>
<evidence type="ECO:0000255" key="5">
    <source>
        <dbReference type="PROSITE-ProRule" id="PRU00175"/>
    </source>
</evidence>
<evidence type="ECO:0000255" key="6">
    <source>
        <dbReference type="PROSITE-ProRule" id="PRU00548"/>
    </source>
</evidence>
<evidence type="ECO:0000305" key="7"/>
<protein>
    <recommendedName>
        <fullName>E3 ubiquitin-protein ligase TRIM50</fullName>
        <ecNumber evidence="2">2.3.2.27</ecNumber>
    </recommendedName>
    <alternativeName>
        <fullName evidence="7">RING-type E3 ubiquitin transferase TRIM50</fullName>
    </alternativeName>
    <alternativeName>
        <fullName>Tripartite motif-containing protein 50</fullName>
    </alternativeName>
</protein>
<dbReference type="EC" id="2.3.2.27" evidence="2"/>
<dbReference type="EMBL" id="AY081951">
    <property type="protein sequence ID" value="AAL91074.1"/>
    <property type="molecule type" value="mRNA"/>
</dbReference>
<dbReference type="RefSeq" id="NP_999351.1">
    <property type="nucleotide sequence ID" value="NM_214186.1"/>
</dbReference>
<dbReference type="SMR" id="Q865W2"/>
<dbReference type="FunCoup" id="Q865W2">
    <property type="interactions" value="357"/>
</dbReference>
<dbReference type="STRING" id="9823.ENSSSCP00000008227"/>
<dbReference type="GlyGen" id="Q865W2">
    <property type="glycosylation" value="1 site"/>
</dbReference>
<dbReference type="PaxDb" id="9823-ENSSSCP00000008227"/>
<dbReference type="GeneID" id="397383"/>
<dbReference type="KEGG" id="ssc:397383"/>
<dbReference type="CTD" id="135892"/>
<dbReference type="eggNOG" id="KOG2177">
    <property type="taxonomic scope" value="Eukaryota"/>
</dbReference>
<dbReference type="HOGENOM" id="CLU_013137_0_3_1"/>
<dbReference type="InParanoid" id="Q865W2"/>
<dbReference type="OrthoDB" id="6105938at2759"/>
<dbReference type="TreeFam" id="TF342569"/>
<dbReference type="Proteomes" id="UP000008227">
    <property type="component" value="Unplaced"/>
</dbReference>
<dbReference type="Proteomes" id="UP000314985">
    <property type="component" value="Unplaced"/>
</dbReference>
<dbReference type="Proteomes" id="UP000694570">
    <property type="component" value="Unplaced"/>
</dbReference>
<dbReference type="Proteomes" id="UP000694571">
    <property type="component" value="Unplaced"/>
</dbReference>
<dbReference type="Proteomes" id="UP000694720">
    <property type="component" value="Unplaced"/>
</dbReference>
<dbReference type="Proteomes" id="UP000694722">
    <property type="component" value="Unplaced"/>
</dbReference>
<dbReference type="Proteomes" id="UP000694723">
    <property type="component" value="Unplaced"/>
</dbReference>
<dbReference type="Proteomes" id="UP000694724">
    <property type="component" value="Unplaced"/>
</dbReference>
<dbReference type="Proteomes" id="UP000694725">
    <property type="component" value="Unplaced"/>
</dbReference>
<dbReference type="Proteomes" id="UP000694726">
    <property type="component" value="Unplaced"/>
</dbReference>
<dbReference type="Proteomes" id="UP000694727">
    <property type="component" value="Unplaced"/>
</dbReference>
<dbReference type="Proteomes" id="UP000694728">
    <property type="component" value="Unplaced"/>
</dbReference>
<dbReference type="GO" id="GO:0005737">
    <property type="term" value="C:cytoplasm"/>
    <property type="evidence" value="ECO:0000318"/>
    <property type="project" value="GO_Central"/>
</dbReference>
<dbReference type="GO" id="GO:0061630">
    <property type="term" value="F:ubiquitin protein ligase activity"/>
    <property type="evidence" value="ECO:0000318"/>
    <property type="project" value="GO_Central"/>
</dbReference>
<dbReference type="GO" id="GO:0008270">
    <property type="term" value="F:zinc ion binding"/>
    <property type="evidence" value="ECO:0007669"/>
    <property type="project" value="UniProtKB-KW"/>
</dbReference>
<dbReference type="GO" id="GO:0045087">
    <property type="term" value="P:innate immune response"/>
    <property type="evidence" value="ECO:0000318"/>
    <property type="project" value="GO_Central"/>
</dbReference>
<dbReference type="CDD" id="cd19787">
    <property type="entry name" value="Bbox2_TRIM50-like"/>
    <property type="match status" value="1"/>
</dbReference>
<dbReference type="CDD" id="cd16605">
    <property type="entry name" value="RING-HC_TRIM50_like_C-IV"/>
    <property type="match status" value="1"/>
</dbReference>
<dbReference type="CDD" id="cd13743">
    <property type="entry name" value="SPRY_PRY_TRIM50"/>
    <property type="match status" value="1"/>
</dbReference>
<dbReference type="FunFam" id="2.60.120.920:FF:000027">
    <property type="entry name" value="E3 ubiquitin-protein ligase TRIM50"/>
    <property type="match status" value="1"/>
</dbReference>
<dbReference type="FunFam" id="3.30.160.60:FF:001490">
    <property type="entry name" value="E3 ubiquitin-protein ligase TRIM50"/>
    <property type="match status" value="1"/>
</dbReference>
<dbReference type="Gene3D" id="2.60.120.920">
    <property type="match status" value="1"/>
</dbReference>
<dbReference type="Gene3D" id="3.30.160.60">
    <property type="entry name" value="Classic Zinc Finger"/>
    <property type="match status" value="1"/>
</dbReference>
<dbReference type="Gene3D" id="3.30.40.10">
    <property type="entry name" value="Zinc/RING finger domain, C3HC4 (zinc finger)"/>
    <property type="match status" value="1"/>
</dbReference>
<dbReference type="InterPro" id="IPR001870">
    <property type="entry name" value="B30.2/SPRY"/>
</dbReference>
<dbReference type="InterPro" id="IPR043136">
    <property type="entry name" value="B30.2/SPRY_sf"/>
</dbReference>
<dbReference type="InterPro" id="IPR003879">
    <property type="entry name" value="Butyrophylin_SPRY"/>
</dbReference>
<dbReference type="InterPro" id="IPR013320">
    <property type="entry name" value="ConA-like_dom_sf"/>
</dbReference>
<dbReference type="InterPro" id="IPR006574">
    <property type="entry name" value="PRY"/>
</dbReference>
<dbReference type="InterPro" id="IPR003877">
    <property type="entry name" value="SPRY_dom"/>
</dbReference>
<dbReference type="InterPro" id="IPR050143">
    <property type="entry name" value="TRIM/RBCC"/>
</dbReference>
<dbReference type="InterPro" id="IPR027370">
    <property type="entry name" value="Znf-RING_euk"/>
</dbReference>
<dbReference type="InterPro" id="IPR000315">
    <property type="entry name" value="Znf_B-box"/>
</dbReference>
<dbReference type="InterPro" id="IPR001841">
    <property type="entry name" value="Znf_RING"/>
</dbReference>
<dbReference type="InterPro" id="IPR013083">
    <property type="entry name" value="Znf_RING/FYVE/PHD"/>
</dbReference>
<dbReference type="InterPro" id="IPR017907">
    <property type="entry name" value="Znf_RING_CS"/>
</dbReference>
<dbReference type="PANTHER" id="PTHR24103">
    <property type="entry name" value="E3 UBIQUITIN-PROTEIN LIGASE TRIM"/>
    <property type="match status" value="1"/>
</dbReference>
<dbReference type="Pfam" id="PF13765">
    <property type="entry name" value="PRY"/>
    <property type="match status" value="1"/>
</dbReference>
<dbReference type="Pfam" id="PF00622">
    <property type="entry name" value="SPRY"/>
    <property type="match status" value="1"/>
</dbReference>
<dbReference type="Pfam" id="PF00643">
    <property type="entry name" value="zf-B_box"/>
    <property type="match status" value="1"/>
</dbReference>
<dbReference type="Pfam" id="PF13445">
    <property type="entry name" value="zf-RING_UBOX"/>
    <property type="match status" value="1"/>
</dbReference>
<dbReference type="PRINTS" id="PR01407">
    <property type="entry name" value="BUTYPHLNCDUF"/>
</dbReference>
<dbReference type="SMART" id="SM00336">
    <property type="entry name" value="BBOX"/>
    <property type="match status" value="1"/>
</dbReference>
<dbReference type="SMART" id="SM00589">
    <property type="entry name" value="PRY"/>
    <property type="match status" value="1"/>
</dbReference>
<dbReference type="SMART" id="SM00184">
    <property type="entry name" value="RING"/>
    <property type="match status" value="1"/>
</dbReference>
<dbReference type="SMART" id="SM00449">
    <property type="entry name" value="SPRY"/>
    <property type="match status" value="1"/>
</dbReference>
<dbReference type="SUPFAM" id="SSF57845">
    <property type="entry name" value="B-box zinc-binding domain"/>
    <property type="match status" value="1"/>
</dbReference>
<dbReference type="SUPFAM" id="SSF49899">
    <property type="entry name" value="Concanavalin A-like lectins/glucanases"/>
    <property type="match status" value="1"/>
</dbReference>
<dbReference type="SUPFAM" id="SSF57850">
    <property type="entry name" value="RING/U-box"/>
    <property type="match status" value="1"/>
</dbReference>
<dbReference type="PROSITE" id="PS50188">
    <property type="entry name" value="B302_SPRY"/>
    <property type="match status" value="1"/>
</dbReference>
<dbReference type="PROSITE" id="PS50119">
    <property type="entry name" value="ZF_BBOX"/>
    <property type="match status" value="1"/>
</dbReference>
<dbReference type="PROSITE" id="PS00518">
    <property type="entry name" value="ZF_RING_1"/>
    <property type="match status" value="1"/>
</dbReference>
<dbReference type="PROSITE" id="PS50089">
    <property type="entry name" value="ZF_RING_2"/>
    <property type="match status" value="1"/>
</dbReference>
<gene>
    <name type="primary">TRIM50</name>
</gene>
<sequence length="486" mass="54776">MAWQVSVPELEDRLQCPVCLEVFKEPLMLQCGHSYCKGCLLSLSRHLDSELRCPVCRQEVDSSSSPPNVSLARVIEALQLPGDPEPQVCTHHRNPLSLFCEKDQELICGLCGLLGSHQHHRVTPVSTVYSRMKEELAALISDLKQEQKKVEEQVAKLVNNRTRIVNESDVFSWVIRREFQELHHLVDEEKARCLEGVEGHTRGLVASLDMQLEQARGAQERLAQATCMLEQFGNESHYEFIRYHSTASSAELQQARLLEGAFSPISFKPGLHQADIKLTVWKRLFRKVLPAPESLKLDPTTAHPLLELSKGNTVVQCGLLAQRRASQPERFDYSTCVLASRGFSCGRHYWEVVVGSKSDWRLGVIKGTASRKGKLNKSPEHGVWLIGLKEGRVYEAFSCPRVPLPVAGHPHRIGVYLHYEQGELTFFDADRPDDLRLLYTFQADFQGKLYPILDTCWHERGSNSLPMVLPLPSGPGHLTPSQPTKL</sequence>
<name>TRI50_PIG</name>
<proteinExistence type="evidence at transcript level"/>
<keyword id="KW-0007">Acetylation</keyword>
<keyword id="KW-0175">Coiled coil</keyword>
<keyword id="KW-0963">Cytoplasm</keyword>
<keyword id="KW-0479">Metal-binding</keyword>
<keyword id="KW-1185">Reference proteome</keyword>
<keyword id="KW-0808">Transferase</keyword>
<keyword id="KW-0832">Ubl conjugation</keyword>
<keyword id="KW-0833">Ubl conjugation pathway</keyword>
<keyword id="KW-0862">Zinc</keyword>
<keyword id="KW-0863">Zinc-finger</keyword>
<organism>
    <name type="scientific">Sus scrofa</name>
    <name type="common">Pig</name>
    <dbReference type="NCBI Taxonomy" id="9823"/>
    <lineage>
        <taxon>Eukaryota</taxon>
        <taxon>Metazoa</taxon>
        <taxon>Chordata</taxon>
        <taxon>Craniata</taxon>
        <taxon>Vertebrata</taxon>
        <taxon>Euteleostomi</taxon>
        <taxon>Mammalia</taxon>
        <taxon>Eutheria</taxon>
        <taxon>Laurasiatheria</taxon>
        <taxon>Artiodactyla</taxon>
        <taxon>Suina</taxon>
        <taxon>Suidae</taxon>
        <taxon>Sus</taxon>
    </lineage>
</organism>
<accession>Q865W2</accession>